<accession>A5IJ66</accession>
<proteinExistence type="inferred from homology"/>
<reference key="1">
    <citation type="submission" date="2007-05" db="EMBL/GenBank/DDBJ databases">
        <title>Complete sequence of Thermotoga petrophila RKU-1.</title>
        <authorList>
            <consortium name="US DOE Joint Genome Institute"/>
            <person name="Copeland A."/>
            <person name="Lucas S."/>
            <person name="Lapidus A."/>
            <person name="Barry K."/>
            <person name="Glavina del Rio T."/>
            <person name="Dalin E."/>
            <person name="Tice H."/>
            <person name="Pitluck S."/>
            <person name="Sims D."/>
            <person name="Brettin T."/>
            <person name="Bruce D."/>
            <person name="Detter J.C."/>
            <person name="Han C."/>
            <person name="Tapia R."/>
            <person name="Schmutz J."/>
            <person name="Larimer F."/>
            <person name="Land M."/>
            <person name="Hauser L."/>
            <person name="Kyrpides N."/>
            <person name="Mikhailova N."/>
            <person name="Nelson K."/>
            <person name="Gogarten J.P."/>
            <person name="Noll K."/>
            <person name="Richardson P."/>
        </authorList>
    </citation>
    <scope>NUCLEOTIDE SEQUENCE [LARGE SCALE GENOMIC DNA]</scope>
    <source>
        <strain>ATCC BAA-488 / DSM 13995 / JCM 10881 / RKU-1</strain>
    </source>
</reference>
<protein>
    <recommendedName>
        <fullName evidence="1">Cysteine--tRNA ligase</fullName>
        <ecNumber evidence="1">6.1.1.16</ecNumber>
    </recommendedName>
    <alternativeName>
        <fullName evidence="1">Cysteinyl-tRNA synthetase</fullName>
        <shortName evidence="1">CysRS</shortName>
    </alternativeName>
</protein>
<sequence length="460" mass="53411">MRITNTLTGKKEEFVPIQPGVVRMYVCGPTVYDLIHVGNARPAVVFDVFRRYLEYRGYRVIMVQNFTDIDDKIINKANQLGVDYKTVADTFIAEYWRDAHALGIRPANFHPRTTDFVDDIVEIIERLVEKGVAYQTETGVYFDVRKFEKYGELSKKKIEDLIAGARVEVDETKKFPLDFSLWKKAKPGEPCWKSPWGEGRPGWHIECTVMSVKILGESFDIHAGGEDLVFPHHENEKAQAEALTGKVFARYWMHNGMVRFLGDKMSKSTGNIFTVREAVKRYGRDGLRYMILSKHYRSPMDFSEELLQDYSRAVKRVWEILGRYEKSGDIGIPKRNAVYEEYVNRFVEALDDDFNTPVAVSLIFELARNLSKAMDDNDREDALLYYHLIRREFGPVLGLFDLNEEKKEVSSEELLKLLIEVRDVLRKEKRYDLSDRIRDHLREIGIILKDTPSGTEYTVE</sequence>
<comment type="catalytic activity">
    <reaction evidence="1">
        <text>tRNA(Cys) + L-cysteine + ATP = L-cysteinyl-tRNA(Cys) + AMP + diphosphate</text>
        <dbReference type="Rhea" id="RHEA:17773"/>
        <dbReference type="Rhea" id="RHEA-COMP:9661"/>
        <dbReference type="Rhea" id="RHEA-COMP:9679"/>
        <dbReference type="ChEBI" id="CHEBI:30616"/>
        <dbReference type="ChEBI" id="CHEBI:33019"/>
        <dbReference type="ChEBI" id="CHEBI:35235"/>
        <dbReference type="ChEBI" id="CHEBI:78442"/>
        <dbReference type="ChEBI" id="CHEBI:78517"/>
        <dbReference type="ChEBI" id="CHEBI:456215"/>
        <dbReference type="EC" id="6.1.1.16"/>
    </reaction>
</comment>
<comment type="cofactor">
    <cofactor evidence="1">
        <name>Zn(2+)</name>
        <dbReference type="ChEBI" id="CHEBI:29105"/>
    </cofactor>
    <text evidence="1">Binds 1 zinc ion per subunit.</text>
</comment>
<comment type="subunit">
    <text evidence="1">Monomer.</text>
</comment>
<comment type="subcellular location">
    <subcellularLocation>
        <location evidence="1">Cytoplasm</location>
    </subcellularLocation>
</comment>
<comment type="similarity">
    <text evidence="1">Belongs to the class-I aminoacyl-tRNA synthetase family.</text>
</comment>
<name>SYC_THEP1</name>
<evidence type="ECO:0000255" key="1">
    <source>
        <dbReference type="HAMAP-Rule" id="MF_00041"/>
    </source>
</evidence>
<feature type="chain" id="PRO_1000090882" description="Cysteine--tRNA ligase">
    <location>
        <begin position="1"/>
        <end position="460"/>
    </location>
</feature>
<feature type="short sequence motif" description="'HIGH' region">
    <location>
        <begin position="29"/>
        <end position="39"/>
    </location>
</feature>
<feature type="short sequence motif" description="'KMSKS' region">
    <location>
        <begin position="264"/>
        <end position="268"/>
    </location>
</feature>
<feature type="binding site" evidence="1">
    <location>
        <position position="27"/>
    </location>
    <ligand>
        <name>Zn(2+)</name>
        <dbReference type="ChEBI" id="CHEBI:29105"/>
    </ligand>
</feature>
<feature type="binding site" evidence="1">
    <location>
        <position position="207"/>
    </location>
    <ligand>
        <name>Zn(2+)</name>
        <dbReference type="ChEBI" id="CHEBI:29105"/>
    </ligand>
</feature>
<feature type="binding site" evidence="1">
    <location>
        <position position="232"/>
    </location>
    <ligand>
        <name>Zn(2+)</name>
        <dbReference type="ChEBI" id="CHEBI:29105"/>
    </ligand>
</feature>
<feature type="binding site" evidence="1">
    <location>
        <position position="236"/>
    </location>
    <ligand>
        <name>Zn(2+)</name>
        <dbReference type="ChEBI" id="CHEBI:29105"/>
    </ligand>
</feature>
<feature type="binding site" evidence="1">
    <location>
        <position position="267"/>
    </location>
    <ligand>
        <name>ATP</name>
        <dbReference type="ChEBI" id="CHEBI:30616"/>
    </ligand>
</feature>
<keyword id="KW-0030">Aminoacyl-tRNA synthetase</keyword>
<keyword id="KW-0067">ATP-binding</keyword>
<keyword id="KW-0963">Cytoplasm</keyword>
<keyword id="KW-0436">Ligase</keyword>
<keyword id="KW-0479">Metal-binding</keyword>
<keyword id="KW-0547">Nucleotide-binding</keyword>
<keyword id="KW-0648">Protein biosynthesis</keyword>
<keyword id="KW-0862">Zinc</keyword>
<dbReference type="EC" id="6.1.1.16" evidence="1"/>
<dbReference type="EMBL" id="CP000702">
    <property type="protein sequence ID" value="ABQ46239.1"/>
    <property type="molecule type" value="Genomic_DNA"/>
</dbReference>
<dbReference type="RefSeq" id="WP_011942893.1">
    <property type="nucleotide sequence ID" value="NC_009486.1"/>
</dbReference>
<dbReference type="SMR" id="A5IJ66"/>
<dbReference type="STRING" id="390874.Tpet_0210"/>
<dbReference type="KEGG" id="tpt:Tpet_0210"/>
<dbReference type="eggNOG" id="COG0215">
    <property type="taxonomic scope" value="Bacteria"/>
</dbReference>
<dbReference type="HOGENOM" id="CLU_013528_0_1_0"/>
<dbReference type="Proteomes" id="UP000006558">
    <property type="component" value="Chromosome"/>
</dbReference>
<dbReference type="GO" id="GO:0005829">
    <property type="term" value="C:cytosol"/>
    <property type="evidence" value="ECO:0007669"/>
    <property type="project" value="TreeGrafter"/>
</dbReference>
<dbReference type="GO" id="GO:0005524">
    <property type="term" value="F:ATP binding"/>
    <property type="evidence" value="ECO:0007669"/>
    <property type="project" value="UniProtKB-UniRule"/>
</dbReference>
<dbReference type="GO" id="GO:0004817">
    <property type="term" value="F:cysteine-tRNA ligase activity"/>
    <property type="evidence" value="ECO:0007669"/>
    <property type="project" value="UniProtKB-UniRule"/>
</dbReference>
<dbReference type="GO" id="GO:0008270">
    <property type="term" value="F:zinc ion binding"/>
    <property type="evidence" value="ECO:0007669"/>
    <property type="project" value="UniProtKB-UniRule"/>
</dbReference>
<dbReference type="GO" id="GO:0006423">
    <property type="term" value="P:cysteinyl-tRNA aminoacylation"/>
    <property type="evidence" value="ECO:0007669"/>
    <property type="project" value="UniProtKB-UniRule"/>
</dbReference>
<dbReference type="CDD" id="cd00672">
    <property type="entry name" value="CysRS_core"/>
    <property type="match status" value="1"/>
</dbReference>
<dbReference type="FunFam" id="3.40.50.620:FF:000068">
    <property type="entry name" value="Cysteine--tRNA ligase"/>
    <property type="match status" value="1"/>
</dbReference>
<dbReference type="Gene3D" id="1.20.120.1910">
    <property type="entry name" value="Cysteine-tRNA ligase, C-terminal anti-codon recognition domain"/>
    <property type="match status" value="1"/>
</dbReference>
<dbReference type="Gene3D" id="3.40.50.620">
    <property type="entry name" value="HUPs"/>
    <property type="match status" value="1"/>
</dbReference>
<dbReference type="HAMAP" id="MF_00041">
    <property type="entry name" value="Cys_tRNA_synth"/>
    <property type="match status" value="1"/>
</dbReference>
<dbReference type="InterPro" id="IPR015803">
    <property type="entry name" value="Cys-tRNA-ligase"/>
</dbReference>
<dbReference type="InterPro" id="IPR015273">
    <property type="entry name" value="Cys-tRNA-synt_Ia_DALR"/>
</dbReference>
<dbReference type="InterPro" id="IPR024909">
    <property type="entry name" value="Cys-tRNA/MSH_ligase"/>
</dbReference>
<dbReference type="InterPro" id="IPR014729">
    <property type="entry name" value="Rossmann-like_a/b/a_fold"/>
</dbReference>
<dbReference type="InterPro" id="IPR032678">
    <property type="entry name" value="tRNA-synt_1_cat_dom"/>
</dbReference>
<dbReference type="InterPro" id="IPR009080">
    <property type="entry name" value="tRNAsynth_Ia_anticodon-bd"/>
</dbReference>
<dbReference type="NCBIfam" id="TIGR00435">
    <property type="entry name" value="cysS"/>
    <property type="match status" value="1"/>
</dbReference>
<dbReference type="PANTHER" id="PTHR10890:SF3">
    <property type="entry name" value="CYSTEINE--TRNA LIGASE, CYTOPLASMIC"/>
    <property type="match status" value="1"/>
</dbReference>
<dbReference type="PANTHER" id="PTHR10890">
    <property type="entry name" value="CYSTEINYL-TRNA SYNTHETASE"/>
    <property type="match status" value="1"/>
</dbReference>
<dbReference type="Pfam" id="PF09190">
    <property type="entry name" value="DALR_2"/>
    <property type="match status" value="1"/>
</dbReference>
<dbReference type="Pfam" id="PF01406">
    <property type="entry name" value="tRNA-synt_1e"/>
    <property type="match status" value="1"/>
</dbReference>
<dbReference type="PRINTS" id="PR00983">
    <property type="entry name" value="TRNASYNTHCYS"/>
</dbReference>
<dbReference type="SMART" id="SM00840">
    <property type="entry name" value="DALR_2"/>
    <property type="match status" value="1"/>
</dbReference>
<dbReference type="SUPFAM" id="SSF47323">
    <property type="entry name" value="Anticodon-binding domain of a subclass of class I aminoacyl-tRNA synthetases"/>
    <property type="match status" value="1"/>
</dbReference>
<dbReference type="SUPFAM" id="SSF52374">
    <property type="entry name" value="Nucleotidylyl transferase"/>
    <property type="match status" value="1"/>
</dbReference>
<organism>
    <name type="scientific">Thermotoga petrophila (strain ATCC BAA-488 / DSM 13995 / JCM 10881 / RKU-1)</name>
    <dbReference type="NCBI Taxonomy" id="390874"/>
    <lineage>
        <taxon>Bacteria</taxon>
        <taxon>Thermotogati</taxon>
        <taxon>Thermotogota</taxon>
        <taxon>Thermotogae</taxon>
        <taxon>Thermotogales</taxon>
        <taxon>Thermotogaceae</taxon>
        <taxon>Thermotoga</taxon>
    </lineage>
</organism>
<gene>
    <name evidence="1" type="primary">cysS</name>
    <name type="ordered locus">Tpet_0210</name>
</gene>